<gene>
    <name evidence="1" type="primary">ymgG</name>
    <name type="ordered locus">EFER_2281</name>
</gene>
<feature type="chain" id="PRO_0000388963" description="UPF0757 protein YmgG">
    <location>
        <begin position="1"/>
        <end position="114"/>
    </location>
</feature>
<organism>
    <name type="scientific">Escherichia fergusonii (strain ATCC 35469 / DSM 13698 / CCUG 18766 / IAM 14443 / JCM 21226 / LMG 7866 / NBRC 102419 / NCTC 12128 / CDC 0568-73)</name>
    <dbReference type="NCBI Taxonomy" id="585054"/>
    <lineage>
        <taxon>Bacteria</taxon>
        <taxon>Pseudomonadati</taxon>
        <taxon>Pseudomonadota</taxon>
        <taxon>Gammaproteobacteria</taxon>
        <taxon>Enterobacterales</taxon>
        <taxon>Enterobacteriaceae</taxon>
        <taxon>Escherichia</taxon>
    </lineage>
</organism>
<proteinExistence type="inferred from homology"/>
<protein>
    <recommendedName>
        <fullName evidence="1">UPF0757 protein YmgG</fullName>
    </recommendedName>
</protein>
<comment type="similarity">
    <text evidence="1">Belongs to the UPF0757 family.</text>
</comment>
<comment type="sequence caution" evidence="2">
    <conflict type="erroneous initiation">
        <sequence resource="EMBL-CDS" id="CAQ89782"/>
    </conflict>
</comment>
<evidence type="ECO:0000255" key="1">
    <source>
        <dbReference type="HAMAP-Rule" id="MF_01455"/>
    </source>
</evidence>
<evidence type="ECO:0000305" key="2"/>
<dbReference type="EMBL" id="CU928158">
    <property type="protein sequence ID" value="CAQ89782.1"/>
    <property type="status" value="ALT_INIT"/>
    <property type="molecule type" value="Genomic_DNA"/>
</dbReference>
<dbReference type="KEGG" id="efe:EFER_2281"/>
<dbReference type="HOGENOM" id="CLU_164687_0_0_6"/>
<dbReference type="Proteomes" id="UP000000745">
    <property type="component" value="Chromosome"/>
</dbReference>
<dbReference type="HAMAP" id="MF_01455">
    <property type="entry name" value="UPF0757"/>
    <property type="match status" value="1"/>
</dbReference>
<dbReference type="InterPro" id="IPR025693">
    <property type="entry name" value="Gly-zipper_OmpA-like_dom"/>
</dbReference>
<dbReference type="InterPro" id="IPR027367">
    <property type="entry name" value="Gly-zipper_YMGG"/>
</dbReference>
<dbReference type="InterPro" id="IPR022833">
    <property type="entry name" value="UPF0757_YmgG"/>
</dbReference>
<dbReference type="Pfam" id="PF13436">
    <property type="entry name" value="Gly-zipper_OmpA"/>
    <property type="match status" value="1"/>
</dbReference>
<dbReference type="Pfam" id="PF13441">
    <property type="entry name" value="Gly-zipper_YMGG"/>
    <property type="match status" value="1"/>
</dbReference>
<reference key="1">
    <citation type="journal article" date="2009" name="PLoS Genet.">
        <title>Organised genome dynamics in the Escherichia coli species results in highly diverse adaptive paths.</title>
        <authorList>
            <person name="Touchon M."/>
            <person name="Hoede C."/>
            <person name="Tenaillon O."/>
            <person name="Barbe V."/>
            <person name="Baeriswyl S."/>
            <person name="Bidet P."/>
            <person name="Bingen E."/>
            <person name="Bonacorsi S."/>
            <person name="Bouchier C."/>
            <person name="Bouvet O."/>
            <person name="Calteau A."/>
            <person name="Chiapello H."/>
            <person name="Clermont O."/>
            <person name="Cruveiller S."/>
            <person name="Danchin A."/>
            <person name="Diard M."/>
            <person name="Dossat C."/>
            <person name="Karoui M.E."/>
            <person name="Frapy E."/>
            <person name="Garry L."/>
            <person name="Ghigo J.M."/>
            <person name="Gilles A.M."/>
            <person name="Johnson J."/>
            <person name="Le Bouguenec C."/>
            <person name="Lescat M."/>
            <person name="Mangenot S."/>
            <person name="Martinez-Jehanne V."/>
            <person name="Matic I."/>
            <person name="Nassif X."/>
            <person name="Oztas S."/>
            <person name="Petit M.A."/>
            <person name="Pichon C."/>
            <person name="Rouy Z."/>
            <person name="Ruf C.S."/>
            <person name="Schneider D."/>
            <person name="Tourret J."/>
            <person name="Vacherie B."/>
            <person name="Vallenet D."/>
            <person name="Medigue C."/>
            <person name="Rocha E.P.C."/>
            <person name="Denamur E."/>
        </authorList>
    </citation>
    <scope>NUCLEOTIDE SEQUENCE [LARGE SCALE GENOMIC DNA]</scope>
    <source>
        <strain>ATCC 35469 / DSM 13698 / BCRC 15582 / CCUG 18766 / IAM 14443 / JCM 21226 / LMG 7866 / NBRC 102419 / NCTC 12128 / CDC 0568-73</strain>
    </source>
</reference>
<accession>B7LJT2</accession>
<name>YMGG_ESCF3</name>
<sequence>MKKHTLALGLISALFFSFQAHADLSRTSKGALLGAGVGLLSGNGVNGVLKGAAVGAGVGAVTEKGKDGKKARKGAKVGATLGAVAGVLTGNGLEGAIKGAVIGGAGGAIVGKMN</sequence>